<keyword id="KW-1185">Reference proteome</keyword>
<reference key="1">
    <citation type="journal article" date="2016" name="PLoS Pathog.">
        <title>Biosynthesis of antibiotic leucinostatins in bio-control fungus Purpureocillium lilacinum and their inhibition on phytophthora revealed by genome mining.</title>
        <authorList>
            <person name="Wang G."/>
            <person name="Liu Z."/>
            <person name="Lin R."/>
            <person name="Li E."/>
            <person name="Mao Z."/>
            <person name="Ling J."/>
            <person name="Yang Y."/>
            <person name="Yin W.B."/>
            <person name="Xie B."/>
        </authorList>
    </citation>
    <scope>NUCLEOTIDE SEQUENCE [LARGE SCALE GENOMIC DNA]</scope>
    <scope>IDENTIFICATION</scope>
    <scope>FUNCTION</scope>
    <scope>INDUCTION</scope>
    <source>
        <strain>PLBJ-1</strain>
    </source>
</reference>
<evidence type="ECO:0000256" key="1">
    <source>
        <dbReference type="SAM" id="MobiDB-lite"/>
    </source>
</evidence>
<evidence type="ECO:0000269" key="2">
    <source>
    </source>
</evidence>
<evidence type="ECO:0000303" key="3">
    <source>
    </source>
</evidence>
<evidence type="ECO:0000305" key="4">
    <source>
    </source>
</evidence>
<proteinExistence type="evidence at transcript level"/>
<dbReference type="EMBL" id="LSBH01000002">
    <property type="protein sequence ID" value="OAQ83759.1"/>
    <property type="molecule type" value="Genomic_DNA"/>
</dbReference>
<dbReference type="EMBL" id="LSBI01000004">
    <property type="protein sequence ID" value="OAQ90539.1"/>
    <property type="molecule type" value="Genomic_DNA"/>
</dbReference>
<dbReference type="RefSeq" id="XP_018179258.1">
    <property type="nucleotide sequence ID" value="XM_018321778.1"/>
</dbReference>
<dbReference type="Proteomes" id="UP000078240">
    <property type="component" value="Unassembled WGS sequence"/>
</dbReference>
<dbReference type="Proteomes" id="UP000078340">
    <property type="component" value="Unassembled WGS sequence"/>
</dbReference>
<protein>
    <recommendedName>
        <fullName evidence="3">Leucinostatins biosynthesis cluster protein M</fullName>
    </recommendedName>
</protein>
<gene>
    <name evidence="3" type="primary">lcsM</name>
    <name type="ORF">VFPBJ_02526</name>
    <name type="ORF">VFPFJ_04698</name>
</gene>
<sequence length="82" mass="9090">MCRCRHPSCITETVFPPLTWLDSEWDEICSLPVARNETHDPSGPRAPVSSMRLGPRSRPYHHGTARLRGSPNCSRDSSSAAT</sequence>
<organism>
    <name type="scientific">Purpureocillium lilacinum</name>
    <name type="common">Paecilomyces lilacinus</name>
    <dbReference type="NCBI Taxonomy" id="33203"/>
    <lineage>
        <taxon>Eukaryota</taxon>
        <taxon>Fungi</taxon>
        <taxon>Dikarya</taxon>
        <taxon>Ascomycota</taxon>
        <taxon>Pezizomycotina</taxon>
        <taxon>Sordariomycetes</taxon>
        <taxon>Hypocreomycetidae</taxon>
        <taxon>Hypocreales</taxon>
        <taxon>Ophiocordycipitaceae</taxon>
        <taxon>Purpureocillium</taxon>
    </lineage>
</organism>
<accession>A0A179HM40</accession>
<feature type="chain" id="PRO_0000446616" description="Leucinostatins biosynthesis cluster protein M">
    <location>
        <begin position="1"/>
        <end position="82"/>
    </location>
</feature>
<feature type="region of interest" description="Disordered" evidence="1">
    <location>
        <begin position="34"/>
        <end position="82"/>
    </location>
</feature>
<feature type="compositionally biased region" description="Polar residues" evidence="1">
    <location>
        <begin position="71"/>
        <end position="82"/>
    </location>
</feature>
<comment type="function">
    <text evidence="2 4">Part of the gene cluster that mediates the biosynthesis of the lipopeptide antibiotics leucinostatins that show extensive biological activities, including antimalarial, antiviral, antibacterial, antifungal, and antitumor activities, as well as phytotoxic (PubMed:27416025). The function of lcsM within the leucinostatins biosynthesis has not been identified yet (Probable).</text>
</comment>
<comment type="induction">
    <text evidence="2">Expression is positively regulated by the leucinostatins biosynthesis cluster-specific transcription regulator lcsF.</text>
</comment>
<name>LCSM_PURLI</name>